<sequence>MSNEFVKQINRSIKSDDNLNDLEFEITKFQLLKKSNTLRTIIKSKDQLSEEQKKIIKQYIKKAIGFEINIEIMYYIDISDITLKQVVDQHWNHVCEKIIEKHPVLKEVLLNSPIVIEGEKIIIKNGSEFLCTFVNKKHIDREIKGYIKSFFGINSLVEVKYDESLANKNYNDEKLNENKEIAKKVIETMKAQAAQEKPVKKESSDNKHKSNGGNKGGYEKKSYKDEPKNENTILGRNIQGDTIDISSIDMGSGIVTISGDVFKTDIFETKTGRIILTFFITDYTSSIAVKCFLRDKDKEHVLENVKKGLYCKVRGEATMDPYAKEVVIMARDINKLTKIERMDTAEEKRVELHMHTTMSSMDAVTAASKIVERAAKFGHKAVAITDHGVVQAFPDAQIAAKKNNIKVIYGVEGYLADNGTPIVINGHEESFDDEYVVFDIETTGFSSKNDKIIEIGAVKLKDGEIVDSFSTFVDPKVNIPYKITELTSITQNMVNGQPTIDEVLPKFMEFVGNSVLVAHNAAFDVGFIKKNLMDMGKTLKNPVMDTVPLARYLYPDLKKVKLNLVAKHLGISLENHHRAVDDAKATAEILKFSFKKMKEEMDIHDVKTLNEKYLSNIDVKKLPLHHIIILAKNQTGIKNLYKLVSMAHLDYFARRPRLPKSIITEYREGLIIGSACEAGQLYKAVLEGKTDGELKEIASFYDYLEIQPIQNNEFLIRKGNVKDEEELRELNRKIYDLGKEMDKPVVATCDCHFLDPNDEVFRRIIMAGQGYGDADNQPPLYFRTTNEMMKEFEYLGEEACREVVIENTQKIADMVEAVKPIPDETFPPKIEGAEEEIRNMTMNKVHSIYGENLPEVVQKRLDKELNSIINNGYAVLYLIAQKLVAKSLEDGYLVGSRGSVGSSFVATMSDITEVNGLPPHYVCPNCKKSEFFLDGSISSGADLPDKNCPDCGAKYIKDGHDIPFETFLGFEGDKEPDIDLNFSGEYQAVVHKYTEVLFGKGYVFKAGTIGTVAEKTAYGFVKKYLQERGLVVSQAEIERLTIGCTGIKRTSGQHPGGIMVVPNDNEIYNFCPIQHPADDVNTDIITTHFDYHSISGRLLKLDILGHDDPTVLRMLQDLTGLDPKTIPLNDPKVISLFTSPDALGVTKEELGCEVGSYGLPEFGTKFVRQMLVDTQPKSFADLVRISGLSHGTDVWLNNAQYFIKEGYTTLKDCIATRDDIMVYLMYKDLPPKTAFTIMEKVRKGKGLSEEDEALMREKNVPDWYIESCKRIKYMFPKGHAVAYVMMAVRIAYYKVYYPEAYYTTYFTVRADDFDADLICKGEEAIKAKMEELNSLGNNISVKEKGLLTILEISYEMYKRGLNFLKVDLYKSEATKFKIEEDGIRPPLNALQGVGDNAAKSIVECRVNGEFISKEDLRLRSKVSKTVIETLDNHGCLEGMQESNQLSLFG</sequence>
<proteinExistence type="inferred from homology"/>
<accession>Q8XJR3</accession>
<reference key="1">
    <citation type="journal article" date="2002" name="Proc. Natl. Acad. Sci. U.S.A.">
        <title>Complete genome sequence of Clostridium perfringens, an anaerobic flesh-eater.</title>
        <authorList>
            <person name="Shimizu T."/>
            <person name="Ohtani K."/>
            <person name="Hirakawa H."/>
            <person name="Ohshima K."/>
            <person name="Yamashita A."/>
            <person name="Shiba T."/>
            <person name="Ogasawara N."/>
            <person name="Hattori M."/>
            <person name="Kuhara S."/>
            <person name="Hayashi H."/>
        </authorList>
    </citation>
    <scope>NUCLEOTIDE SEQUENCE [LARGE SCALE GENOMIC DNA]</scope>
    <source>
        <strain>13 / Type A</strain>
    </source>
</reference>
<name>DPO3_CLOPE</name>
<protein>
    <recommendedName>
        <fullName evidence="1">DNA polymerase III PolC-type</fullName>
        <shortName evidence="1">PolIII</shortName>
        <ecNumber evidence="1">2.7.7.7</ecNumber>
    </recommendedName>
</protein>
<evidence type="ECO:0000255" key="1">
    <source>
        <dbReference type="HAMAP-Rule" id="MF_00356"/>
    </source>
</evidence>
<evidence type="ECO:0000256" key="2">
    <source>
        <dbReference type="SAM" id="MobiDB-lite"/>
    </source>
</evidence>
<gene>
    <name evidence="1" type="primary">polC</name>
    <name type="ordered locus">CPE1691</name>
</gene>
<dbReference type="EC" id="2.7.7.7" evidence="1"/>
<dbReference type="EMBL" id="BA000016">
    <property type="protein sequence ID" value="BAB81397.1"/>
    <property type="molecule type" value="Genomic_DNA"/>
</dbReference>
<dbReference type="RefSeq" id="WP_003469123.1">
    <property type="nucleotide sequence ID" value="NC_003366.1"/>
</dbReference>
<dbReference type="SMR" id="Q8XJR3"/>
<dbReference type="STRING" id="195102.gene:10490955"/>
<dbReference type="KEGG" id="cpe:CPE1691"/>
<dbReference type="HOGENOM" id="CLU_003297_2_0_9"/>
<dbReference type="Proteomes" id="UP000000818">
    <property type="component" value="Chromosome"/>
</dbReference>
<dbReference type="GO" id="GO:0005737">
    <property type="term" value="C:cytoplasm"/>
    <property type="evidence" value="ECO:0007669"/>
    <property type="project" value="UniProtKB-SubCell"/>
</dbReference>
<dbReference type="GO" id="GO:0008408">
    <property type="term" value="F:3'-5' exonuclease activity"/>
    <property type="evidence" value="ECO:0007669"/>
    <property type="project" value="UniProtKB-UniRule"/>
</dbReference>
<dbReference type="GO" id="GO:0003677">
    <property type="term" value="F:DNA binding"/>
    <property type="evidence" value="ECO:0007669"/>
    <property type="project" value="UniProtKB-UniRule"/>
</dbReference>
<dbReference type="GO" id="GO:0003887">
    <property type="term" value="F:DNA-directed DNA polymerase activity"/>
    <property type="evidence" value="ECO:0007669"/>
    <property type="project" value="UniProtKB-UniRule"/>
</dbReference>
<dbReference type="GO" id="GO:0006261">
    <property type="term" value="P:DNA-templated DNA replication"/>
    <property type="evidence" value="ECO:0007669"/>
    <property type="project" value="UniProtKB-UniRule"/>
</dbReference>
<dbReference type="CDD" id="cd06127">
    <property type="entry name" value="DEDDh"/>
    <property type="match status" value="1"/>
</dbReference>
<dbReference type="CDD" id="cd07435">
    <property type="entry name" value="PHP_PolIIIA_POLC"/>
    <property type="match status" value="1"/>
</dbReference>
<dbReference type="CDD" id="cd04484">
    <property type="entry name" value="polC_OBF"/>
    <property type="match status" value="1"/>
</dbReference>
<dbReference type="FunFam" id="3.30.420.10:FF:000045">
    <property type="entry name" value="3'-5' exonuclease DinG"/>
    <property type="match status" value="1"/>
</dbReference>
<dbReference type="Gene3D" id="1.10.150.870">
    <property type="match status" value="1"/>
</dbReference>
<dbReference type="Gene3D" id="3.30.1900.20">
    <property type="match status" value="2"/>
</dbReference>
<dbReference type="Gene3D" id="3.20.20.140">
    <property type="entry name" value="Metal-dependent hydrolases"/>
    <property type="match status" value="1"/>
</dbReference>
<dbReference type="Gene3D" id="2.40.50.140">
    <property type="entry name" value="Nucleic acid-binding proteins"/>
    <property type="match status" value="1"/>
</dbReference>
<dbReference type="Gene3D" id="1.10.150.700">
    <property type="entry name" value="PolC, middle finger domain"/>
    <property type="match status" value="2"/>
</dbReference>
<dbReference type="Gene3D" id="3.30.420.10">
    <property type="entry name" value="Ribonuclease H-like superfamily/Ribonuclease H"/>
    <property type="match status" value="1"/>
</dbReference>
<dbReference type="HAMAP" id="MF_00356">
    <property type="entry name" value="DNApol_PolC"/>
    <property type="match status" value="1"/>
</dbReference>
<dbReference type="InterPro" id="IPR011708">
    <property type="entry name" value="DNA_pol3_alpha_NTPase_dom"/>
</dbReference>
<dbReference type="InterPro" id="IPR040982">
    <property type="entry name" value="DNA_pol3_finger"/>
</dbReference>
<dbReference type="InterPro" id="IPR024754">
    <property type="entry name" value="DNA_PolC-like_N_II"/>
</dbReference>
<dbReference type="InterPro" id="IPR004805">
    <property type="entry name" value="DnaE2/DnaE/PolC"/>
</dbReference>
<dbReference type="InterPro" id="IPR029460">
    <property type="entry name" value="DNAPol_HHH"/>
</dbReference>
<dbReference type="InterPro" id="IPR006054">
    <property type="entry name" value="DnaQ"/>
</dbReference>
<dbReference type="InterPro" id="IPR013520">
    <property type="entry name" value="Exonuclease_RNaseT/DNA_pol3"/>
</dbReference>
<dbReference type="InterPro" id="IPR012340">
    <property type="entry name" value="NA-bd_OB-fold"/>
</dbReference>
<dbReference type="InterPro" id="IPR004365">
    <property type="entry name" value="NA-bd_OB_tRNA"/>
</dbReference>
<dbReference type="InterPro" id="IPR004013">
    <property type="entry name" value="PHP_dom"/>
</dbReference>
<dbReference type="InterPro" id="IPR003141">
    <property type="entry name" value="Pol/His_phosphatase_N"/>
</dbReference>
<dbReference type="InterPro" id="IPR006308">
    <property type="entry name" value="Pol_III_a_PolC-type_gram_pos"/>
</dbReference>
<dbReference type="InterPro" id="IPR044923">
    <property type="entry name" value="PolC_middle_finger_sf"/>
</dbReference>
<dbReference type="InterPro" id="IPR012337">
    <property type="entry name" value="RNaseH-like_sf"/>
</dbReference>
<dbReference type="InterPro" id="IPR036397">
    <property type="entry name" value="RNaseH_sf"/>
</dbReference>
<dbReference type="NCBIfam" id="TIGR00573">
    <property type="entry name" value="dnaq"/>
    <property type="match status" value="1"/>
</dbReference>
<dbReference type="NCBIfam" id="TIGR01405">
    <property type="entry name" value="polC_Gram_pos"/>
    <property type="match status" value="1"/>
</dbReference>
<dbReference type="NCBIfam" id="NF001688">
    <property type="entry name" value="PRK00448.1"/>
    <property type="match status" value="1"/>
</dbReference>
<dbReference type="PANTHER" id="PTHR32294:SF5">
    <property type="entry name" value="DNA POLYMERASE III POLC-TYPE"/>
    <property type="match status" value="1"/>
</dbReference>
<dbReference type="PANTHER" id="PTHR32294">
    <property type="entry name" value="DNA POLYMERASE III SUBUNIT ALPHA"/>
    <property type="match status" value="1"/>
</dbReference>
<dbReference type="Pfam" id="PF11490">
    <property type="entry name" value="DNA_pol3_a_NII"/>
    <property type="match status" value="1"/>
</dbReference>
<dbReference type="Pfam" id="PF07733">
    <property type="entry name" value="DNA_pol3_alpha"/>
    <property type="match status" value="1"/>
</dbReference>
<dbReference type="Pfam" id="PF17657">
    <property type="entry name" value="DNA_pol3_finger"/>
    <property type="match status" value="1"/>
</dbReference>
<dbReference type="Pfam" id="PF14579">
    <property type="entry name" value="HHH_6"/>
    <property type="match status" value="1"/>
</dbReference>
<dbReference type="Pfam" id="PF02811">
    <property type="entry name" value="PHP"/>
    <property type="match status" value="1"/>
</dbReference>
<dbReference type="Pfam" id="PF00929">
    <property type="entry name" value="RNase_T"/>
    <property type="match status" value="1"/>
</dbReference>
<dbReference type="Pfam" id="PF01336">
    <property type="entry name" value="tRNA_anti-codon"/>
    <property type="match status" value="1"/>
</dbReference>
<dbReference type="SMART" id="SM00479">
    <property type="entry name" value="EXOIII"/>
    <property type="match status" value="1"/>
</dbReference>
<dbReference type="SMART" id="SM00481">
    <property type="entry name" value="POLIIIAc"/>
    <property type="match status" value="1"/>
</dbReference>
<dbReference type="SUPFAM" id="SSF53098">
    <property type="entry name" value="Ribonuclease H-like"/>
    <property type="match status" value="1"/>
</dbReference>
<feature type="chain" id="PRO_0000204575" description="DNA polymerase III PolC-type">
    <location>
        <begin position="1"/>
        <end position="1449"/>
    </location>
</feature>
<feature type="domain" description="Exonuclease">
    <location>
        <begin position="435"/>
        <end position="590"/>
    </location>
</feature>
<feature type="region of interest" description="Disordered" evidence="2">
    <location>
        <begin position="194"/>
        <end position="231"/>
    </location>
</feature>
<feature type="compositionally biased region" description="Basic and acidic residues" evidence="2">
    <location>
        <begin position="197"/>
        <end position="208"/>
    </location>
</feature>
<feature type="compositionally biased region" description="Basic and acidic residues" evidence="2">
    <location>
        <begin position="217"/>
        <end position="229"/>
    </location>
</feature>
<comment type="function">
    <text evidence="1">Required for replicative DNA synthesis. This DNA polymerase also exhibits 3' to 5' exonuclease activity.</text>
</comment>
<comment type="catalytic activity">
    <reaction evidence="1">
        <text>DNA(n) + a 2'-deoxyribonucleoside 5'-triphosphate = DNA(n+1) + diphosphate</text>
        <dbReference type="Rhea" id="RHEA:22508"/>
        <dbReference type="Rhea" id="RHEA-COMP:17339"/>
        <dbReference type="Rhea" id="RHEA-COMP:17340"/>
        <dbReference type="ChEBI" id="CHEBI:33019"/>
        <dbReference type="ChEBI" id="CHEBI:61560"/>
        <dbReference type="ChEBI" id="CHEBI:173112"/>
        <dbReference type="EC" id="2.7.7.7"/>
    </reaction>
</comment>
<comment type="subcellular location">
    <subcellularLocation>
        <location evidence="1">Cytoplasm</location>
    </subcellularLocation>
</comment>
<comment type="similarity">
    <text evidence="1">Belongs to the DNA polymerase type-C family. PolC subfamily.</text>
</comment>
<keyword id="KW-0963">Cytoplasm</keyword>
<keyword id="KW-0235">DNA replication</keyword>
<keyword id="KW-0239">DNA-directed DNA polymerase</keyword>
<keyword id="KW-0269">Exonuclease</keyword>
<keyword id="KW-0378">Hydrolase</keyword>
<keyword id="KW-0540">Nuclease</keyword>
<keyword id="KW-0548">Nucleotidyltransferase</keyword>
<keyword id="KW-1185">Reference proteome</keyword>
<keyword id="KW-0808">Transferase</keyword>
<organism>
    <name type="scientific">Clostridium perfringens (strain 13 / Type A)</name>
    <dbReference type="NCBI Taxonomy" id="195102"/>
    <lineage>
        <taxon>Bacteria</taxon>
        <taxon>Bacillati</taxon>
        <taxon>Bacillota</taxon>
        <taxon>Clostridia</taxon>
        <taxon>Eubacteriales</taxon>
        <taxon>Clostridiaceae</taxon>
        <taxon>Clostridium</taxon>
    </lineage>
</organism>